<keyword id="KW-0963">Cytoplasm</keyword>
<keyword id="KW-0378">Hydrolase</keyword>
<keyword id="KW-0645">Protease</keyword>
<keyword id="KW-0720">Serine protease</keyword>
<reference key="1">
    <citation type="journal article" date="2007" name="PLoS ONE">
        <title>Analysis of the neurotoxin complex genes in Clostridium botulinum A1-A4 and B1 strains: BoNT/A3, /Ba4 and /B1 clusters are located within plasmids.</title>
        <authorList>
            <person name="Smith T.J."/>
            <person name="Hill K.K."/>
            <person name="Foley B.T."/>
            <person name="Detter J.C."/>
            <person name="Munk A.C."/>
            <person name="Bruce D.C."/>
            <person name="Doggett N.A."/>
            <person name="Smith L.A."/>
            <person name="Marks J.D."/>
            <person name="Xie G."/>
            <person name="Brettin T.S."/>
        </authorList>
    </citation>
    <scope>NUCLEOTIDE SEQUENCE [LARGE SCALE GENOMIC DNA]</scope>
    <source>
        <strain>Loch Maree / Type A3</strain>
    </source>
</reference>
<accession>B1L1D7</accession>
<evidence type="ECO:0000255" key="1">
    <source>
        <dbReference type="HAMAP-Rule" id="MF_00444"/>
    </source>
</evidence>
<organism>
    <name type="scientific">Clostridium botulinum (strain Loch Maree / Type A3)</name>
    <dbReference type="NCBI Taxonomy" id="498214"/>
    <lineage>
        <taxon>Bacteria</taxon>
        <taxon>Bacillati</taxon>
        <taxon>Bacillota</taxon>
        <taxon>Clostridia</taxon>
        <taxon>Eubacteriales</taxon>
        <taxon>Clostridiaceae</taxon>
        <taxon>Clostridium</taxon>
    </lineage>
</organism>
<sequence length="194" mass="21503">MSLVPVVVEQTNRGERSYDIYSRLLKDRIIMLSEEVNDTTASLIVAQLLFLEAEDPDKDIHLYINSPGGSITSGMAIYDTMQYIKPDVSTICVGMAASMGAFLLVAGAKGKRYALPNSEVMIHQPLGGFQGQATDIGIHAERILKMKKKLNTILSDRTGKPLEQVELDTERDHFLSAEEAKEYGLIDEVIDKKK</sequence>
<protein>
    <recommendedName>
        <fullName evidence="1">ATP-dependent Clp protease proteolytic subunit</fullName>
        <ecNumber evidence="1">3.4.21.92</ecNumber>
    </recommendedName>
    <alternativeName>
        <fullName evidence="1">Endopeptidase Clp</fullName>
    </alternativeName>
</protein>
<feature type="chain" id="PRO_1000189637" description="ATP-dependent Clp protease proteolytic subunit">
    <location>
        <begin position="1"/>
        <end position="194"/>
    </location>
</feature>
<feature type="active site" description="Nucleophile" evidence="1">
    <location>
        <position position="98"/>
    </location>
</feature>
<feature type="active site" evidence="1">
    <location>
        <position position="123"/>
    </location>
</feature>
<dbReference type="EC" id="3.4.21.92" evidence="1"/>
<dbReference type="EMBL" id="CP000962">
    <property type="protein sequence ID" value="ACA55938.1"/>
    <property type="molecule type" value="Genomic_DNA"/>
</dbReference>
<dbReference type="RefSeq" id="WP_012343858.1">
    <property type="nucleotide sequence ID" value="NC_010520.1"/>
</dbReference>
<dbReference type="SMR" id="B1L1D7"/>
<dbReference type="MEROPS" id="S14.001"/>
<dbReference type="KEGG" id="cbl:CLK_2629"/>
<dbReference type="HOGENOM" id="CLU_058707_3_2_9"/>
<dbReference type="GO" id="GO:0005737">
    <property type="term" value="C:cytoplasm"/>
    <property type="evidence" value="ECO:0007669"/>
    <property type="project" value="UniProtKB-SubCell"/>
</dbReference>
<dbReference type="GO" id="GO:0009368">
    <property type="term" value="C:endopeptidase Clp complex"/>
    <property type="evidence" value="ECO:0007669"/>
    <property type="project" value="TreeGrafter"/>
</dbReference>
<dbReference type="GO" id="GO:0004176">
    <property type="term" value="F:ATP-dependent peptidase activity"/>
    <property type="evidence" value="ECO:0007669"/>
    <property type="project" value="InterPro"/>
</dbReference>
<dbReference type="GO" id="GO:0051117">
    <property type="term" value="F:ATPase binding"/>
    <property type="evidence" value="ECO:0007669"/>
    <property type="project" value="TreeGrafter"/>
</dbReference>
<dbReference type="GO" id="GO:0004252">
    <property type="term" value="F:serine-type endopeptidase activity"/>
    <property type="evidence" value="ECO:0007669"/>
    <property type="project" value="UniProtKB-UniRule"/>
</dbReference>
<dbReference type="GO" id="GO:0006515">
    <property type="term" value="P:protein quality control for misfolded or incompletely synthesized proteins"/>
    <property type="evidence" value="ECO:0007669"/>
    <property type="project" value="TreeGrafter"/>
</dbReference>
<dbReference type="CDD" id="cd07017">
    <property type="entry name" value="S14_ClpP_2"/>
    <property type="match status" value="1"/>
</dbReference>
<dbReference type="FunFam" id="3.90.226.10:FF:000001">
    <property type="entry name" value="ATP-dependent Clp protease proteolytic subunit"/>
    <property type="match status" value="1"/>
</dbReference>
<dbReference type="Gene3D" id="3.90.226.10">
    <property type="entry name" value="2-enoyl-CoA Hydratase, Chain A, domain 1"/>
    <property type="match status" value="1"/>
</dbReference>
<dbReference type="HAMAP" id="MF_00444">
    <property type="entry name" value="ClpP"/>
    <property type="match status" value="1"/>
</dbReference>
<dbReference type="InterPro" id="IPR001907">
    <property type="entry name" value="ClpP"/>
</dbReference>
<dbReference type="InterPro" id="IPR029045">
    <property type="entry name" value="ClpP/crotonase-like_dom_sf"/>
</dbReference>
<dbReference type="InterPro" id="IPR023562">
    <property type="entry name" value="ClpP/TepA"/>
</dbReference>
<dbReference type="InterPro" id="IPR033135">
    <property type="entry name" value="ClpP_His_AS"/>
</dbReference>
<dbReference type="InterPro" id="IPR018215">
    <property type="entry name" value="ClpP_Ser_AS"/>
</dbReference>
<dbReference type="NCBIfam" id="TIGR00493">
    <property type="entry name" value="clpP"/>
    <property type="match status" value="1"/>
</dbReference>
<dbReference type="NCBIfam" id="NF001368">
    <property type="entry name" value="PRK00277.1"/>
    <property type="match status" value="1"/>
</dbReference>
<dbReference type="NCBIfam" id="NF009205">
    <property type="entry name" value="PRK12553.1"/>
    <property type="match status" value="1"/>
</dbReference>
<dbReference type="PANTHER" id="PTHR10381">
    <property type="entry name" value="ATP-DEPENDENT CLP PROTEASE PROTEOLYTIC SUBUNIT"/>
    <property type="match status" value="1"/>
</dbReference>
<dbReference type="PANTHER" id="PTHR10381:SF70">
    <property type="entry name" value="ATP-DEPENDENT CLP PROTEASE PROTEOLYTIC SUBUNIT"/>
    <property type="match status" value="1"/>
</dbReference>
<dbReference type="Pfam" id="PF00574">
    <property type="entry name" value="CLP_protease"/>
    <property type="match status" value="1"/>
</dbReference>
<dbReference type="PRINTS" id="PR00127">
    <property type="entry name" value="CLPPROTEASEP"/>
</dbReference>
<dbReference type="SUPFAM" id="SSF52096">
    <property type="entry name" value="ClpP/crotonase"/>
    <property type="match status" value="1"/>
</dbReference>
<dbReference type="PROSITE" id="PS00382">
    <property type="entry name" value="CLP_PROTEASE_HIS"/>
    <property type="match status" value="1"/>
</dbReference>
<dbReference type="PROSITE" id="PS00381">
    <property type="entry name" value="CLP_PROTEASE_SER"/>
    <property type="match status" value="1"/>
</dbReference>
<gene>
    <name evidence="1" type="primary">clpP</name>
    <name type="ordered locus">CLK_2629</name>
</gene>
<proteinExistence type="inferred from homology"/>
<name>CLPP_CLOBM</name>
<comment type="function">
    <text evidence="1">Cleaves peptides in various proteins in a process that requires ATP hydrolysis. Has a chymotrypsin-like activity. Plays a major role in the degradation of misfolded proteins.</text>
</comment>
<comment type="catalytic activity">
    <reaction evidence="1">
        <text>Hydrolysis of proteins to small peptides in the presence of ATP and magnesium. alpha-casein is the usual test substrate. In the absence of ATP, only oligopeptides shorter than five residues are hydrolyzed (such as succinyl-Leu-Tyr-|-NHMec, and Leu-Tyr-Leu-|-Tyr-Trp, in which cleavage of the -Tyr-|-Leu- and -Tyr-|-Trp bonds also occurs).</text>
        <dbReference type="EC" id="3.4.21.92"/>
    </reaction>
</comment>
<comment type="subunit">
    <text evidence="1">Fourteen ClpP subunits assemble into 2 heptameric rings which stack back to back to give a disk-like structure with a central cavity, resembling the structure of eukaryotic proteasomes.</text>
</comment>
<comment type="subcellular location">
    <subcellularLocation>
        <location evidence="1">Cytoplasm</location>
    </subcellularLocation>
</comment>
<comment type="similarity">
    <text evidence="1">Belongs to the peptidase S14 family.</text>
</comment>